<keyword id="KW-0002">3D-structure</keyword>
<keyword id="KW-0963">Cytoplasm</keyword>
<keyword id="KW-0223">Dioxygenase</keyword>
<keyword id="KW-0275">Fatty acid biosynthesis</keyword>
<keyword id="KW-0276">Fatty acid metabolism</keyword>
<keyword id="KW-0408">Iron</keyword>
<keyword id="KW-0444">Lipid biosynthesis</keyword>
<keyword id="KW-0443">Lipid metabolism</keyword>
<keyword id="KW-0479">Metal-binding</keyword>
<keyword id="KW-0560">Oxidoreductase</keyword>
<keyword id="KW-0925">Oxylipin biosynthesis</keyword>
<keyword id="KW-0611">Plant defense</keyword>
<keyword id="KW-1185">Reference proteome</keyword>
<keyword id="KW-0346">Stress response</keyword>
<name>LOX1_ARATH</name>
<accession>Q06327</accession>
<accession>Q9FZ30</accession>
<feature type="chain" id="PRO_0000220703" description="Linoleate 9S-lipoxygenase 1">
    <location>
        <begin position="1"/>
        <end position="859"/>
    </location>
</feature>
<feature type="domain" description="PLAT" evidence="1">
    <location>
        <begin position="21"/>
        <end position="161"/>
    </location>
</feature>
<feature type="domain" description="Lipoxygenase" evidence="2">
    <location>
        <begin position="164"/>
        <end position="859"/>
    </location>
</feature>
<feature type="region of interest" description="Disordered" evidence="3">
    <location>
        <begin position="213"/>
        <end position="246"/>
    </location>
</feature>
<feature type="binding site" evidence="2">
    <location>
        <position position="519"/>
    </location>
    <ligand>
        <name>Fe cation</name>
        <dbReference type="ChEBI" id="CHEBI:24875"/>
        <note>catalytic</note>
    </ligand>
</feature>
<feature type="binding site" evidence="2">
    <location>
        <position position="524"/>
    </location>
    <ligand>
        <name>Fe cation</name>
        <dbReference type="ChEBI" id="CHEBI:24875"/>
        <note>catalytic</note>
    </ligand>
</feature>
<feature type="binding site" evidence="2">
    <location>
        <position position="711"/>
    </location>
    <ligand>
        <name>Fe cation</name>
        <dbReference type="ChEBI" id="CHEBI:24875"/>
        <note>catalytic</note>
    </ligand>
</feature>
<feature type="binding site" evidence="2">
    <location>
        <position position="715"/>
    </location>
    <ligand>
        <name>Fe cation</name>
        <dbReference type="ChEBI" id="CHEBI:24875"/>
        <note>catalytic</note>
    </ligand>
</feature>
<feature type="binding site" evidence="2">
    <location>
        <position position="859"/>
    </location>
    <ligand>
        <name>Fe cation</name>
        <dbReference type="ChEBI" id="CHEBI:24875"/>
        <note>catalytic</note>
    </ligand>
</feature>
<comment type="function">
    <text evidence="6 7 8 9 10 11 12 13 14">9S-lipoxygenase that can use linoleic acid or linolenic acid as substrates. Plant lipoxygenases may be involved in a number of diverse aspects of plant physiology including growth and development, pest resistance, and senescence or responses to wounding. Catalyzes the hydroperoxidation of lipids containing a cis,cis-1,4-pentadiene structure. Function as regulators of root development by controlling the emergence of lateral roots (PubMed:17369372, PubMed:18949503). 9S-lypoxygenase-derived oxylipins may play an antagonistic role to ethylene signaling in the control of responses involving oxidative stress, lipid peroxidation and plant defense (PubMed:21481031). LOX1-derived oxylipins may be involved in stress signaling from roots to shoots in response to cadmium exposure (PubMed:23314084). 9S-lypoxygenase-derived oxylipins are engaged during infection to control the balance between salicylic acid (SA) and jasmonate (JA) signaling to facilitate infection by the fungal pathogen Fusarium graminearum (PubMed:26075826). 9S-lypoxygenase-derived oxylipins activate brassinosteroid signaling to promote cell wall-based defense and limit pathogen infection (PubMed:26417008). The LOX1-derived compound (9S)-hydroperoxy-(10E,12Z,15Z)-octadecatrienoate protects plant tissues against infection by the bacterial pathogen Pseudomonas syringae pv tomato DC3000 (PubMed:22199234). The LOX1-derived oxylipins are required to trigger stomatal closure in response to both infection by the bacterial pathogen Pseudomonas syringae pv tomato DC3000, and the pathogen-associated molecular pattern (PAMP) flagellin peptide flg22 (PubMed:23526882). Contributes to the oxidation of free fatty acids during seed aging (PubMed:28371855).</text>
</comment>
<comment type="catalytic activity">
    <reaction evidence="7">
        <text>(9Z,12Z)-octadecadienoate + O2 = (9S)-hydroperoxy-(10E,12Z)-octadecadienoate</text>
        <dbReference type="Rhea" id="RHEA:30291"/>
        <dbReference type="ChEBI" id="CHEBI:15379"/>
        <dbReference type="ChEBI" id="CHEBI:30245"/>
        <dbReference type="ChEBI" id="CHEBI:60955"/>
        <dbReference type="EC" id="1.13.11.58"/>
    </reaction>
    <physiologicalReaction direction="left-to-right" evidence="7">
        <dbReference type="Rhea" id="RHEA:30292"/>
    </physiologicalReaction>
</comment>
<comment type="catalytic activity">
    <reaction evidence="7">
        <text>(9Z,12Z,15Z)-octadecatrienoate + O2 = (9S)-hydroperoxy-(10E,12Z,15Z)-octadecatrienoate</text>
        <dbReference type="Rhea" id="RHEA:51248"/>
        <dbReference type="ChEBI" id="CHEBI:15379"/>
        <dbReference type="ChEBI" id="CHEBI:32387"/>
        <dbReference type="ChEBI" id="CHEBI:60962"/>
    </reaction>
    <physiologicalReaction direction="left-to-right" evidence="7">
        <dbReference type="Rhea" id="RHEA:51249"/>
    </physiologicalReaction>
</comment>
<comment type="cofactor">
    <cofactor evidence="2">
        <name>Fe cation</name>
        <dbReference type="ChEBI" id="CHEBI:24875"/>
    </cofactor>
    <text evidence="2">Binds 1 Fe cation per subunit. Iron is tightly bound.</text>
</comment>
<comment type="pathway">
    <text evidence="2">Lipid metabolism; oxylipin biosynthesis.</text>
</comment>
<comment type="subunit">
    <text>Monomer.</text>
</comment>
<comment type="subcellular location">
    <subcellularLocation>
        <location>Cytoplasm</location>
    </subcellularLocation>
</comment>
<comment type="tissue specificity">
    <text evidence="5 6 11 15 16">Seedlings, roots, leaves, and flowers (at protein level) (PubMed:12232208, PubMed:17369372, PubMed:7506426, Ref.7). Expressed in guard cells (PubMed:23526882).</text>
</comment>
<comment type="developmental stage">
    <text evidence="4 5 6">Transiently expressed during germination, within 1 day after imbibition, especially in the epidermis and the aleurone layer. Later present in the epidermis of the radicle and the adaxial side of the cotyledons. In roots, confined to the pericycle cells and in the lateral root primordia (LRP), and declined at the time of lateral root emergence. Expression is greatly increased in leaves during leaf senescence.</text>
</comment>
<comment type="induction">
    <text evidence="5 12 15">By pathogens (e.g. Pseudomonas syringae), wounding, abscisic acid (ABA) and methyl jasmonate (MeJA). Higher levels in light than in dark conditions (PubMed:12232208, PubMed:7506426). Induced by infection with the fungal pathogen Fusarium graminearum (PubMed:26075826).</text>
</comment>
<comment type="disruption phenotype">
    <text evidence="6 9 11 12 13">Increment in the number of lateral roots, and moderate increase in the length of the primary root (PubMed:17369372). Enhanced disease resistance to the fungal pathogen Fusarium graminearum (PubMed:26075826). Enhanced susceptibility to the bacterial pathogen Pseudomonas syringae pv tomato DC3000 (PubMed:22199234, PubMed:23526882). The double mutant plants lox1 and lox5 exhibit enhanced susceptibility to the bacterial pathogen Pseudomonas syringae pv tomato DC3000 and the biotrophic powdery mildew pathogen Golovinomyces cichoracearum (PubMed:26417008).</text>
</comment>
<comment type="similarity">
    <text evidence="19">Belongs to the lipoxygenase family.</text>
</comment>
<proteinExistence type="evidence at protein level"/>
<dbReference type="EC" id="1.13.11.58" evidence="7"/>
<dbReference type="EMBL" id="L04637">
    <property type="protein sequence ID" value="AAA32827.1"/>
    <property type="molecule type" value="mRNA"/>
</dbReference>
<dbReference type="EMBL" id="U01843">
    <property type="protein sequence ID" value="AAA17036.1"/>
    <property type="molecule type" value="Genomic_DNA"/>
</dbReference>
<dbReference type="EMBL" id="AC064840">
    <property type="protein sequence ID" value="AAG00881.1"/>
    <property type="molecule type" value="Genomic_DNA"/>
</dbReference>
<dbReference type="EMBL" id="AC069144">
    <property type="protein sequence ID" value="AAG51123.1"/>
    <property type="molecule type" value="Genomic_DNA"/>
</dbReference>
<dbReference type="EMBL" id="CP002684">
    <property type="protein sequence ID" value="AEE33175.1"/>
    <property type="molecule type" value="Genomic_DNA"/>
</dbReference>
<dbReference type="EMBL" id="AY093104">
    <property type="protein sequence ID" value="AAM13103.1"/>
    <property type="molecule type" value="mRNA"/>
</dbReference>
<dbReference type="EMBL" id="BT010358">
    <property type="protein sequence ID" value="AAQ56801.1"/>
    <property type="molecule type" value="mRNA"/>
</dbReference>
<dbReference type="PIR" id="JQ2267">
    <property type="entry name" value="JQ2267"/>
</dbReference>
<dbReference type="RefSeq" id="NP_175900.1">
    <property type="nucleotide sequence ID" value="NM_104376.3"/>
</dbReference>
<dbReference type="PDB" id="8I6Y">
    <property type="method" value="X-ray"/>
    <property type="resolution" value="3.26 A"/>
    <property type="chains" value="A/B=1-859"/>
</dbReference>
<dbReference type="PDBsum" id="8I6Y"/>
<dbReference type="SMR" id="Q06327"/>
<dbReference type="BioGRID" id="27169">
    <property type="interactions" value="1"/>
</dbReference>
<dbReference type="FunCoup" id="Q06327">
    <property type="interactions" value="101"/>
</dbReference>
<dbReference type="STRING" id="3702.Q06327"/>
<dbReference type="SwissLipids" id="SLP:000001762"/>
<dbReference type="PaxDb" id="3702-AT1G55020.1"/>
<dbReference type="ProteomicsDB" id="238668"/>
<dbReference type="EnsemblPlants" id="AT1G55020.1">
    <property type="protein sequence ID" value="AT1G55020.1"/>
    <property type="gene ID" value="AT1G55020"/>
</dbReference>
<dbReference type="GeneID" id="841944"/>
<dbReference type="Gramene" id="AT1G55020.1">
    <property type="protein sequence ID" value="AT1G55020.1"/>
    <property type="gene ID" value="AT1G55020"/>
</dbReference>
<dbReference type="KEGG" id="ath:AT1G55020"/>
<dbReference type="Araport" id="AT1G55020"/>
<dbReference type="TAIR" id="AT1G55020">
    <property type="gene designation" value="LOX1"/>
</dbReference>
<dbReference type="eggNOG" id="ENOG502QQSP">
    <property type="taxonomic scope" value="Eukaryota"/>
</dbReference>
<dbReference type="HOGENOM" id="CLU_004282_0_0_1"/>
<dbReference type="InParanoid" id="Q06327"/>
<dbReference type="OMA" id="WVKEYLA"/>
<dbReference type="PhylomeDB" id="Q06327"/>
<dbReference type="BRENDA" id="1.13.11.58">
    <property type="organism ID" value="399"/>
</dbReference>
<dbReference type="UniPathway" id="UPA00382"/>
<dbReference type="PRO" id="PR:Q06327"/>
<dbReference type="Proteomes" id="UP000006548">
    <property type="component" value="Chromosome 1"/>
</dbReference>
<dbReference type="ExpressionAtlas" id="Q06327">
    <property type="expression patterns" value="baseline and differential"/>
</dbReference>
<dbReference type="GO" id="GO:0009536">
    <property type="term" value="C:plastid"/>
    <property type="evidence" value="ECO:0000314"/>
    <property type="project" value="TAIR"/>
</dbReference>
<dbReference type="GO" id="GO:1990136">
    <property type="term" value="F:linoleate 9S-lipoxygenase activity"/>
    <property type="evidence" value="ECO:0000314"/>
    <property type="project" value="UniProtKB"/>
</dbReference>
<dbReference type="GO" id="GO:0046872">
    <property type="term" value="F:metal ion binding"/>
    <property type="evidence" value="ECO:0007669"/>
    <property type="project" value="UniProtKB-KW"/>
</dbReference>
<dbReference type="GO" id="GO:0006952">
    <property type="term" value="P:defense response"/>
    <property type="evidence" value="ECO:0007669"/>
    <property type="project" value="UniProtKB-KW"/>
</dbReference>
<dbReference type="GO" id="GO:0006633">
    <property type="term" value="P:fatty acid biosynthetic process"/>
    <property type="evidence" value="ECO:0007669"/>
    <property type="project" value="UniProtKB-KW"/>
</dbReference>
<dbReference type="GO" id="GO:0010311">
    <property type="term" value="P:lateral root formation"/>
    <property type="evidence" value="ECO:0000315"/>
    <property type="project" value="UniProtKB"/>
</dbReference>
<dbReference type="GO" id="GO:0034440">
    <property type="term" value="P:lipid oxidation"/>
    <property type="evidence" value="ECO:0000314"/>
    <property type="project" value="TAIR"/>
</dbReference>
<dbReference type="GO" id="GO:0031408">
    <property type="term" value="P:oxylipin biosynthetic process"/>
    <property type="evidence" value="ECO:0007669"/>
    <property type="project" value="UniProtKB-UniPathway"/>
</dbReference>
<dbReference type="GO" id="GO:0009737">
    <property type="term" value="P:response to abscisic acid"/>
    <property type="evidence" value="ECO:0000270"/>
    <property type="project" value="UniProtKB"/>
</dbReference>
<dbReference type="GO" id="GO:0009753">
    <property type="term" value="P:response to jasmonic acid"/>
    <property type="evidence" value="ECO:0000270"/>
    <property type="project" value="UniProtKB"/>
</dbReference>
<dbReference type="GO" id="GO:0048364">
    <property type="term" value="P:root development"/>
    <property type="evidence" value="ECO:0000315"/>
    <property type="project" value="TAIR"/>
</dbReference>
<dbReference type="CDD" id="cd01751">
    <property type="entry name" value="PLAT_LH2"/>
    <property type="match status" value="1"/>
</dbReference>
<dbReference type="FunFam" id="1.20.245.10:FF:000002">
    <property type="entry name" value="Lipoxygenase"/>
    <property type="match status" value="1"/>
</dbReference>
<dbReference type="FunFam" id="2.60.60.20:FF:000015">
    <property type="entry name" value="Lipoxygenase"/>
    <property type="match status" value="1"/>
</dbReference>
<dbReference type="FunFam" id="3.10.450.60:FF:000002">
    <property type="entry name" value="Lipoxygenase"/>
    <property type="match status" value="1"/>
</dbReference>
<dbReference type="FunFam" id="4.10.372.10:FF:000001">
    <property type="entry name" value="Lipoxygenase"/>
    <property type="match status" value="1"/>
</dbReference>
<dbReference type="FunFam" id="4.10.375.10:FF:000001">
    <property type="entry name" value="Lipoxygenase"/>
    <property type="match status" value="1"/>
</dbReference>
<dbReference type="Gene3D" id="3.10.450.60">
    <property type="match status" value="1"/>
</dbReference>
<dbReference type="Gene3D" id="4.10.375.10">
    <property type="entry name" value="Lipoxygenase-1, Domain 2"/>
    <property type="match status" value="1"/>
</dbReference>
<dbReference type="Gene3D" id="4.10.372.10">
    <property type="entry name" value="Lipoxygenase-1, Domain 3"/>
    <property type="match status" value="1"/>
</dbReference>
<dbReference type="Gene3D" id="1.20.245.10">
    <property type="entry name" value="Lipoxygenase-1, Domain 5"/>
    <property type="match status" value="1"/>
</dbReference>
<dbReference type="Gene3D" id="2.60.60.20">
    <property type="entry name" value="PLAT/LH2 domain"/>
    <property type="match status" value="1"/>
</dbReference>
<dbReference type="InterPro" id="IPR000907">
    <property type="entry name" value="LipOase"/>
</dbReference>
<dbReference type="InterPro" id="IPR013819">
    <property type="entry name" value="LipOase_C"/>
</dbReference>
<dbReference type="InterPro" id="IPR036226">
    <property type="entry name" value="LipOase_C_sf"/>
</dbReference>
<dbReference type="InterPro" id="IPR020834">
    <property type="entry name" value="LipOase_CS"/>
</dbReference>
<dbReference type="InterPro" id="IPR020833">
    <property type="entry name" value="LipOase_Fe_BS"/>
</dbReference>
<dbReference type="InterPro" id="IPR001246">
    <property type="entry name" value="LipOase_plant"/>
</dbReference>
<dbReference type="InterPro" id="IPR042057">
    <property type="entry name" value="Lipoxy_PLAT/LH2"/>
</dbReference>
<dbReference type="InterPro" id="IPR027433">
    <property type="entry name" value="Lipoxygenase_dom_3"/>
</dbReference>
<dbReference type="InterPro" id="IPR001024">
    <property type="entry name" value="PLAT/LH2_dom"/>
</dbReference>
<dbReference type="InterPro" id="IPR036392">
    <property type="entry name" value="PLAT/LH2_dom_sf"/>
</dbReference>
<dbReference type="PANTHER" id="PTHR11771">
    <property type="entry name" value="LIPOXYGENASE"/>
    <property type="match status" value="1"/>
</dbReference>
<dbReference type="Pfam" id="PF00305">
    <property type="entry name" value="Lipoxygenase"/>
    <property type="match status" value="1"/>
</dbReference>
<dbReference type="Pfam" id="PF01477">
    <property type="entry name" value="PLAT"/>
    <property type="match status" value="1"/>
</dbReference>
<dbReference type="PRINTS" id="PR00087">
    <property type="entry name" value="LIPOXYGENASE"/>
</dbReference>
<dbReference type="PRINTS" id="PR00468">
    <property type="entry name" value="PLTLPOXGNASE"/>
</dbReference>
<dbReference type="SMART" id="SM00308">
    <property type="entry name" value="LH2"/>
    <property type="match status" value="1"/>
</dbReference>
<dbReference type="SUPFAM" id="SSF49723">
    <property type="entry name" value="Lipase/lipooxygenase domain (PLAT/LH2 domain)"/>
    <property type="match status" value="1"/>
</dbReference>
<dbReference type="SUPFAM" id="SSF48484">
    <property type="entry name" value="Lipoxigenase"/>
    <property type="match status" value="1"/>
</dbReference>
<dbReference type="PROSITE" id="PS00711">
    <property type="entry name" value="LIPOXYGENASE_1"/>
    <property type="match status" value="1"/>
</dbReference>
<dbReference type="PROSITE" id="PS00081">
    <property type="entry name" value="LIPOXYGENASE_2"/>
    <property type="match status" value="1"/>
</dbReference>
<dbReference type="PROSITE" id="PS51393">
    <property type="entry name" value="LIPOXYGENASE_3"/>
    <property type="match status" value="1"/>
</dbReference>
<dbReference type="PROSITE" id="PS50095">
    <property type="entry name" value="PLAT"/>
    <property type="match status" value="1"/>
</dbReference>
<evidence type="ECO:0000255" key="1">
    <source>
        <dbReference type="PROSITE-ProRule" id="PRU00152"/>
    </source>
</evidence>
<evidence type="ECO:0000255" key="2">
    <source>
        <dbReference type="PROSITE-ProRule" id="PRU00726"/>
    </source>
</evidence>
<evidence type="ECO:0000256" key="3">
    <source>
        <dbReference type="SAM" id="MobiDB-lite"/>
    </source>
</evidence>
<evidence type="ECO:0000269" key="4">
    <source>
    </source>
</evidence>
<evidence type="ECO:0000269" key="5">
    <source>
    </source>
</evidence>
<evidence type="ECO:0000269" key="6">
    <source>
    </source>
</evidence>
<evidence type="ECO:0000269" key="7">
    <source>
    </source>
</evidence>
<evidence type="ECO:0000269" key="8">
    <source>
    </source>
</evidence>
<evidence type="ECO:0000269" key="9">
    <source>
    </source>
</evidence>
<evidence type="ECO:0000269" key="10">
    <source>
    </source>
</evidence>
<evidence type="ECO:0000269" key="11">
    <source>
    </source>
</evidence>
<evidence type="ECO:0000269" key="12">
    <source>
    </source>
</evidence>
<evidence type="ECO:0000269" key="13">
    <source>
    </source>
</evidence>
<evidence type="ECO:0000269" key="14">
    <source>
    </source>
</evidence>
<evidence type="ECO:0000269" key="15">
    <source>
    </source>
</evidence>
<evidence type="ECO:0000269" key="16">
    <source ref="7"/>
</evidence>
<evidence type="ECO:0000303" key="17">
    <source>
    </source>
</evidence>
<evidence type="ECO:0000303" key="18">
    <source>
    </source>
</evidence>
<evidence type="ECO:0000305" key="19"/>
<evidence type="ECO:0000312" key="20">
    <source>
        <dbReference type="Araport" id="AT1G55020"/>
    </source>
</evidence>
<evidence type="ECO:0000312" key="21">
    <source>
        <dbReference type="EMBL" id="AAG00881.1"/>
    </source>
</evidence>
<sequence length="859" mass="98045">MFGELRDLLTGGGNETTTKKVKGTVVLMKKNVLDFNDFNASFLDRLHEFLGNKITLRLVSSDVTDSENGSKGKLGKAAHLEDWITTITSLTAGESAFKVTFDYETDFGYPGAFLIRNSHFSEFLLKSLTLEDVPGHGRVHYICNSWIYPAKHYTTDRVFFSNKTYLPHETPATLLKYREEELVSLRGTGEGELKEWDRVYDYAYYNDLGVPPKNPRPVLGGTQEYPYPRRGRTGRKPTKEDPQTESRLPITSSLDIYVPRDERFGHLKMSDFLAYALKAIAQFIQPALEAVFDDTPKEFDSFEDVLKIYEEGIDLPNQALIDSIVKNIPLEMLKEIFRTDGQKFLKFPVPQVIKEDKTAWRTDEEFAREMLAGLNPVVIQLLKEFPPKSKLDSESYGNQNSTITKSHIEHNLDGLTVEEALEKERLFILDHHDTLMPYLGRVNTTTTKTYASRTLLFLKDDGTLKPLVIELSLPHPNGDKFGAVSEVYTPGEGVYDSLWQLAKAFVGVNDSGNHQLISHWMQTHASIEPFVIATNRQLSVLHPVFKLLEPHFRDTMNINALARQILINGGGIFEITVFPSKYAMEMSSFIYKNHWTFPDQALPAELKKRGMAVEDPEAPHGLRLRIKDYPYAVDGLEVWYAIESWVRDYIFLFYKIEEDIQTDTELQAWWKEVREEGHGDKKSEPWWPKMQTREELVESCTIIIWVASALHAAVNFGQYPVAGYLPNRPTISRQYMPKENTPEFEELEKNPDKVFLKTITAQLQTLLGISLIEILSTHSSDEVYLGQRDSKEWAAEKEALEAFEKFGEKVKEIEKNIDERNDDETLKNRTGLVKMPYTLLFPSSEGGVTGRGIPNSVSI</sequence>
<protein>
    <recommendedName>
        <fullName evidence="17">Linoleate 9S-lipoxygenase 1</fullName>
        <ecNumber evidence="7">1.13.11.58</ecNumber>
    </recommendedName>
    <alternativeName>
        <fullName evidence="17">Lipoxygenase 1</fullName>
        <shortName evidence="18">AtLOX1</shortName>
    </alternativeName>
</protein>
<reference key="1">
    <citation type="journal article" date="1993" name="Plant Physiol.">
        <title>An Arabidopsis thaliana lipoxygenase gene can be induced by pathogens, abscisic acid, and methyl jasmonate.</title>
        <authorList>
            <person name="Melan M.A."/>
            <person name="Dong X."/>
            <person name="Endara M.E."/>
            <person name="Davis K.R."/>
            <person name="Ausubel F.M."/>
            <person name="Peterman T.K."/>
        </authorList>
    </citation>
    <scope>NUCLEOTIDE SEQUENCE [MRNA]</scope>
    <scope>INDUCTION BY ABA; JA AND PATHOGEN</scope>
    <scope>TISSUE SPECIFICITY</scope>
    <source>
        <strain>cv. Columbia</strain>
        <tissue>Root</tissue>
    </source>
</reference>
<reference key="2">
    <citation type="journal article" date="1994" name="Biochim. Biophys. Acta">
        <title>Structure and sequence of the Arabidopsis thaliana lipoxygenase 1 gene.</title>
        <authorList>
            <person name="Melan M.A."/>
            <person name="Nemhauser J.M."/>
            <person name="Peterman T.K."/>
        </authorList>
    </citation>
    <scope>NUCLEOTIDE SEQUENCE [GENOMIC DNA]</scope>
    <source>
        <strain>cv. Landsberg erecta</strain>
    </source>
</reference>
<reference key="3">
    <citation type="journal article" date="2000" name="Nature">
        <title>Sequence and analysis of chromosome 1 of the plant Arabidopsis thaliana.</title>
        <authorList>
            <person name="Theologis A."/>
            <person name="Ecker J.R."/>
            <person name="Palm C.J."/>
            <person name="Federspiel N.A."/>
            <person name="Kaul S."/>
            <person name="White O."/>
            <person name="Alonso J."/>
            <person name="Altafi H."/>
            <person name="Araujo R."/>
            <person name="Bowman C.L."/>
            <person name="Brooks S.Y."/>
            <person name="Buehler E."/>
            <person name="Chan A."/>
            <person name="Chao Q."/>
            <person name="Chen H."/>
            <person name="Cheuk R.F."/>
            <person name="Chin C.W."/>
            <person name="Chung M.K."/>
            <person name="Conn L."/>
            <person name="Conway A.B."/>
            <person name="Conway A.R."/>
            <person name="Creasy T.H."/>
            <person name="Dewar K."/>
            <person name="Dunn P."/>
            <person name="Etgu P."/>
            <person name="Feldblyum T.V."/>
            <person name="Feng J.-D."/>
            <person name="Fong B."/>
            <person name="Fujii C.Y."/>
            <person name="Gill J.E."/>
            <person name="Goldsmith A.D."/>
            <person name="Haas B."/>
            <person name="Hansen N.F."/>
            <person name="Hughes B."/>
            <person name="Huizar L."/>
            <person name="Hunter J.L."/>
            <person name="Jenkins J."/>
            <person name="Johnson-Hopson C."/>
            <person name="Khan S."/>
            <person name="Khaykin E."/>
            <person name="Kim C.J."/>
            <person name="Koo H.L."/>
            <person name="Kremenetskaia I."/>
            <person name="Kurtz D.B."/>
            <person name="Kwan A."/>
            <person name="Lam B."/>
            <person name="Langin-Hooper S."/>
            <person name="Lee A."/>
            <person name="Lee J.M."/>
            <person name="Lenz C.A."/>
            <person name="Li J.H."/>
            <person name="Li Y.-P."/>
            <person name="Lin X."/>
            <person name="Liu S.X."/>
            <person name="Liu Z.A."/>
            <person name="Luros J.S."/>
            <person name="Maiti R."/>
            <person name="Marziali A."/>
            <person name="Militscher J."/>
            <person name="Miranda M."/>
            <person name="Nguyen M."/>
            <person name="Nierman W.C."/>
            <person name="Osborne B.I."/>
            <person name="Pai G."/>
            <person name="Peterson J."/>
            <person name="Pham P.K."/>
            <person name="Rizzo M."/>
            <person name="Rooney T."/>
            <person name="Rowley D."/>
            <person name="Sakano H."/>
            <person name="Salzberg S.L."/>
            <person name="Schwartz J.R."/>
            <person name="Shinn P."/>
            <person name="Southwick A.M."/>
            <person name="Sun H."/>
            <person name="Tallon L.J."/>
            <person name="Tambunga G."/>
            <person name="Toriumi M.J."/>
            <person name="Town C.D."/>
            <person name="Utterback T."/>
            <person name="Van Aken S."/>
            <person name="Vaysberg M."/>
            <person name="Vysotskaia V.S."/>
            <person name="Walker M."/>
            <person name="Wu D."/>
            <person name="Yu G."/>
            <person name="Fraser C.M."/>
            <person name="Venter J.C."/>
            <person name="Davis R.W."/>
        </authorList>
    </citation>
    <scope>NUCLEOTIDE SEQUENCE [LARGE SCALE GENOMIC DNA]</scope>
    <source>
        <strain>cv. Columbia</strain>
    </source>
</reference>
<reference key="4">
    <citation type="journal article" date="2017" name="Plant J.">
        <title>Araport11: a complete reannotation of the Arabidopsis thaliana reference genome.</title>
        <authorList>
            <person name="Cheng C.Y."/>
            <person name="Krishnakumar V."/>
            <person name="Chan A.P."/>
            <person name="Thibaud-Nissen F."/>
            <person name="Schobel S."/>
            <person name="Town C.D."/>
        </authorList>
    </citation>
    <scope>GENOME REANNOTATION</scope>
    <source>
        <strain>cv. Columbia</strain>
    </source>
</reference>
<reference key="5">
    <citation type="journal article" date="2003" name="Science">
        <title>Empirical analysis of transcriptional activity in the Arabidopsis genome.</title>
        <authorList>
            <person name="Yamada K."/>
            <person name="Lim J."/>
            <person name="Dale J.M."/>
            <person name="Chen H."/>
            <person name="Shinn P."/>
            <person name="Palm C.J."/>
            <person name="Southwick A.M."/>
            <person name="Wu H.C."/>
            <person name="Kim C.J."/>
            <person name="Nguyen M."/>
            <person name="Pham P.K."/>
            <person name="Cheuk R.F."/>
            <person name="Karlin-Newmann G."/>
            <person name="Liu S.X."/>
            <person name="Lam B."/>
            <person name="Sakano H."/>
            <person name="Wu T."/>
            <person name="Yu G."/>
            <person name="Miranda M."/>
            <person name="Quach H.L."/>
            <person name="Tripp M."/>
            <person name="Chang C.H."/>
            <person name="Lee J.M."/>
            <person name="Toriumi M.J."/>
            <person name="Chan M.M."/>
            <person name="Tang C.C."/>
            <person name="Onodera C.S."/>
            <person name="Deng J.M."/>
            <person name="Akiyama K."/>
            <person name="Ansari Y."/>
            <person name="Arakawa T."/>
            <person name="Banh J."/>
            <person name="Banno F."/>
            <person name="Bowser L."/>
            <person name="Brooks S.Y."/>
            <person name="Carninci P."/>
            <person name="Chao Q."/>
            <person name="Choy N."/>
            <person name="Enju A."/>
            <person name="Goldsmith A.D."/>
            <person name="Gurjal M."/>
            <person name="Hansen N.F."/>
            <person name="Hayashizaki Y."/>
            <person name="Johnson-Hopson C."/>
            <person name="Hsuan V.W."/>
            <person name="Iida K."/>
            <person name="Karnes M."/>
            <person name="Khan S."/>
            <person name="Koesema E."/>
            <person name="Ishida J."/>
            <person name="Jiang P.X."/>
            <person name="Jones T."/>
            <person name="Kawai J."/>
            <person name="Kamiya A."/>
            <person name="Meyers C."/>
            <person name="Nakajima M."/>
            <person name="Narusaka M."/>
            <person name="Seki M."/>
            <person name="Sakurai T."/>
            <person name="Satou M."/>
            <person name="Tamse R."/>
            <person name="Vaysberg M."/>
            <person name="Wallender E.K."/>
            <person name="Wong C."/>
            <person name="Yamamura Y."/>
            <person name="Yuan S."/>
            <person name="Shinozaki K."/>
            <person name="Davis R.W."/>
            <person name="Theologis A."/>
            <person name="Ecker J.R."/>
        </authorList>
    </citation>
    <scope>NUCLEOTIDE SEQUENCE [LARGE SCALE MRNA]</scope>
    <source>
        <strain>cv. Columbia</strain>
    </source>
</reference>
<reference key="6">
    <citation type="journal article" date="1994" name="Plant Physiol.">
        <title>The LOX1 gene of Arabidopsis is temporally and spatially regulated in germinating seedlings.</title>
        <authorList>
            <person name="Melan M.A."/>
            <person name="Enriquez A.L.D."/>
            <person name="Peterman T.K."/>
        </authorList>
    </citation>
    <scope>TISSUE SPECIFICITY</scope>
    <scope>INDUCTION BY LIGHT</scope>
    <scope>DEVELOPMENTAL STAGE</scope>
</reference>
<reference key="7">
    <citation type="journal article" date="1994" name="Plant Physiol. Biochem.">
        <title>Immunological characterization of Arabidopsis thaliana lipoxygenase: Expression of the LOX1 gene product in Escherichia coli and polyclonal antibody production.</title>
        <authorList>
            <person name="Peterman T.K."/>
            <person name="Rattigan E.M."/>
            <person name="Enriquez A."/>
            <person name="Melan M.A."/>
        </authorList>
    </citation>
    <scope>TISSUE SPECIFICITY</scope>
</reference>
<reference key="8">
    <citation type="journal article" date="2002" name="Plant Physiol.">
        <title>Evidence supporting a role of jasmonic acid in Arabidopsis leaf senescence.</title>
        <authorList>
            <person name="He Y."/>
            <person name="Fukushige H."/>
            <person name="Hildebrand D.F."/>
            <person name="Gan S."/>
        </authorList>
    </citation>
    <scope>DEVELOPMENTAL STAGE</scope>
</reference>
<reference key="9">
    <citation type="journal article" date="2007" name="Plant Cell">
        <title>Oxylipins produced by the 9-lipoxygenase pathway in Arabidopsis regulate lateral root development and defense responses through a specific signaling cascade.</title>
        <authorList>
            <person name="Vellosillo T."/>
            <person name="Martinez M."/>
            <person name="Lopez M.A."/>
            <person name="Vicente J."/>
            <person name="Cascon T."/>
            <person name="Dolan L."/>
            <person name="Hamberg M."/>
            <person name="Castresana C."/>
        </authorList>
    </citation>
    <scope>FUNCTION</scope>
    <scope>DISRUPTION PHENOTYPE</scope>
    <scope>TISSUE SPECIFICITY</scope>
    <scope>DEVELOPMENTAL STAGE</scope>
</reference>
<reference key="10">
    <citation type="journal article" date="2009" name="Lipids">
        <title>Diversity of the enzymatic activity in the lipoxygenase gene family of Arabidopsis thaliana.</title>
        <authorList>
            <person name="Bannenberg G."/>
            <person name="Martinez M."/>
            <person name="Hamberg M."/>
            <person name="Castresana C."/>
        </authorList>
    </citation>
    <scope>FUNCTION</scope>
    <scope>CATALYTIC ACTIVITY</scope>
</reference>
<reference key="11">
    <citation type="journal article" date="2011" name="Plant J.">
        <title>Antagonistic role of 9-lipoxygenase-derived oxylipins and ethylene in the control of oxidative stress, lipid peroxidation and plant defence.</title>
        <authorList>
            <person name="Lopez M.A."/>
            <person name="Vicente J."/>
            <person name="Kulasekaran S."/>
            <person name="Vellosillo T."/>
            <person name="Martinez M."/>
            <person name="Irigoyen M.L."/>
            <person name="Cascon T."/>
            <person name="Bannenberg G."/>
            <person name="Hamberg M."/>
            <person name="Castresana C."/>
        </authorList>
    </citation>
    <scope>FUNCTION</scope>
</reference>
<reference key="12">
    <citation type="journal article" date="2012" name="Mol. Plant">
        <title>Role of 9-lipoxygenase and alpha-dioxygenase oxylipin pathways as modulators of local and systemic defense.</title>
        <authorList>
            <person name="Vicente J."/>
            <person name="Cascon T."/>
            <person name="Vicedo B."/>
            <person name="Garcia-Agustin P."/>
            <person name="Hamberg M."/>
            <person name="Castresana C."/>
        </authorList>
    </citation>
    <scope>FUNCTION</scope>
    <scope>DISRUPTION PHENOTYPE</scope>
</reference>
<reference key="13">
    <citation type="journal article" date="2013" name="Plant Physiol. Biochem.">
        <title>A mutant of the Arabidopsis thaliana LIPOXYGENASE1 gene shows altered signalling and oxidative stress related responses after cadmium exposure.</title>
        <authorList>
            <person name="Keunen E."/>
            <person name="Remans T."/>
            <person name="Opdenakker K."/>
            <person name="Jozefczak M."/>
            <person name="Gielen H."/>
            <person name="Guisez Y."/>
            <person name="Vangronsveld J."/>
            <person name="Cuypers A."/>
        </authorList>
    </citation>
    <scope>FUNCTION</scope>
</reference>
<reference key="14">
    <citation type="journal article" date="2013" name="PLoS Biol.">
        <title>An abscisic acid-independent oxylipin pathway controls stomatal closure and immune defense in Arabidopsis.</title>
        <authorList>
            <person name="Montillet J.L."/>
            <person name="Leonhardt N."/>
            <person name="Mondy S."/>
            <person name="Tranchimand S."/>
            <person name="Rumeau D."/>
            <person name="Boudsocq M."/>
            <person name="Garcia A.V."/>
            <person name="Douki T."/>
            <person name="Bigeard J."/>
            <person name="Lauriere C."/>
            <person name="Chevalier A."/>
            <person name="Castresana C."/>
            <person name="Hirt H."/>
        </authorList>
    </citation>
    <scope>FUNCTION</scope>
    <scope>TISSUE SPECIFICITY</scope>
    <scope>DISRUPTION PHENOTYPE</scope>
</reference>
<reference key="15">
    <citation type="journal article" date="2015" name="Mol. Plant Microbe Interact.">
        <title>Facilitation of Fusarium graminearum infection by 9-lipoxygenases in Arabidopsis and wheat.</title>
        <authorList>
            <person name="Nalam V.J."/>
            <person name="Alam S."/>
            <person name="Keereetaweep J."/>
            <person name="Venables B."/>
            <person name="Burdan D."/>
            <person name="Lee H."/>
            <person name="Trick H.N."/>
            <person name="Sarowar S."/>
            <person name="Makandar R."/>
            <person name="Shah J."/>
        </authorList>
    </citation>
    <scope>FUNCTION</scope>
    <scope>INDUCTION BY FUSARIUM GRAMINEARUM</scope>
    <scope>DISRUPTION PHENOTYPE</scope>
</reference>
<reference key="16">
    <citation type="journal article" date="2015" name="Plant Physiol.">
        <title>9-Lipoxygenase-derived oxylipins activate brassinosteroid signaling to promote cell wall-based defense and limit pathogen infection.</title>
        <authorList>
            <person name="Marcos R."/>
            <person name="Izquierdo Y."/>
            <person name="Vellosillo T."/>
            <person name="Kulasekaran S."/>
            <person name="Cascon T."/>
            <person name="Hamberg M."/>
            <person name="Castresana C."/>
        </authorList>
    </citation>
    <scope>FUNCTION</scope>
    <scope>DISRUPTION PHENOTYPE</scope>
</reference>
<reference key="17">
    <citation type="journal article" date="2017" name="Plant Cell Physiol.">
        <title>Enzymatic and non-enzymatic mechanisms contribute to lipid oxidation during seed aging.</title>
        <authorList>
            <person name="Oenel A."/>
            <person name="Fekete A."/>
            <person name="Krischke M."/>
            <person name="Faul S.C."/>
            <person name="Gresser G."/>
            <person name="Havaux M."/>
            <person name="Mueller M.J."/>
            <person name="Berger S."/>
        </authorList>
    </citation>
    <scope>FUNCTION</scope>
</reference>
<organism>
    <name type="scientific">Arabidopsis thaliana</name>
    <name type="common">Mouse-ear cress</name>
    <dbReference type="NCBI Taxonomy" id="3702"/>
    <lineage>
        <taxon>Eukaryota</taxon>
        <taxon>Viridiplantae</taxon>
        <taxon>Streptophyta</taxon>
        <taxon>Embryophyta</taxon>
        <taxon>Tracheophyta</taxon>
        <taxon>Spermatophyta</taxon>
        <taxon>Magnoliopsida</taxon>
        <taxon>eudicotyledons</taxon>
        <taxon>Gunneridae</taxon>
        <taxon>Pentapetalae</taxon>
        <taxon>rosids</taxon>
        <taxon>malvids</taxon>
        <taxon>Brassicales</taxon>
        <taxon>Brassicaceae</taxon>
        <taxon>Camelineae</taxon>
        <taxon>Arabidopsis</taxon>
    </lineage>
</organism>
<gene>
    <name evidence="17" type="primary">LOX1</name>
    <name evidence="20" type="ordered locus">At1g55020</name>
    <name type="ORF">F14C21.3</name>
    <name type="ORF">F14C21.54</name>
    <name evidence="21" type="ORF">T24C10.13</name>
</gene>